<name>ACP_GRABC</name>
<reference key="1">
    <citation type="journal article" date="2007" name="J. Bacteriol.">
        <title>Genome sequence analysis of the emerging human pathogenic acetic acid bacterium Granulibacter bethesdensis.</title>
        <authorList>
            <person name="Greenberg D.E."/>
            <person name="Porcella S.F."/>
            <person name="Zelazny A.M."/>
            <person name="Virtaneva K."/>
            <person name="Sturdevant D.E."/>
            <person name="Kupko J.J. III"/>
            <person name="Barbian K.D."/>
            <person name="Babar A."/>
            <person name="Dorward D.W."/>
            <person name="Holland S.M."/>
        </authorList>
    </citation>
    <scope>NUCLEOTIDE SEQUENCE [LARGE SCALE GENOMIC DNA]</scope>
    <source>
        <strain>ATCC BAA-1260 / CGDNIH1</strain>
    </source>
</reference>
<comment type="function">
    <text evidence="1">Carrier of the growing fatty acid chain in fatty acid biosynthesis.</text>
</comment>
<comment type="pathway">
    <text evidence="1">Lipid metabolism; fatty acid biosynthesis.</text>
</comment>
<comment type="subcellular location">
    <subcellularLocation>
        <location evidence="1">Cytoplasm</location>
    </subcellularLocation>
</comment>
<comment type="PTM">
    <text evidence="1">4'-phosphopantetheine is transferred from CoA to a specific serine of apo-ACP by AcpS. This modification is essential for activity because fatty acids are bound in thioester linkage to the sulfhydryl of the prosthetic group.</text>
</comment>
<comment type="similarity">
    <text evidence="1">Belongs to the acyl carrier protein (ACP) family.</text>
</comment>
<dbReference type="EMBL" id="CP000394">
    <property type="protein sequence ID" value="ABI63107.1"/>
    <property type="molecule type" value="Genomic_DNA"/>
</dbReference>
<dbReference type="RefSeq" id="WP_011632909.1">
    <property type="nucleotide sequence ID" value="NC_008343.2"/>
</dbReference>
<dbReference type="SMR" id="Q0BPZ5"/>
<dbReference type="STRING" id="391165.GbCGDNIH1_2209"/>
<dbReference type="GeneID" id="69746390"/>
<dbReference type="KEGG" id="gbe:GbCGDNIH1_2209"/>
<dbReference type="eggNOG" id="COG0236">
    <property type="taxonomic scope" value="Bacteria"/>
</dbReference>
<dbReference type="HOGENOM" id="CLU_108696_5_1_5"/>
<dbReference type="OrthoDB" id="9804551at2"/>
<dbReference type="UniPathway" id="UPA00094"/>
<dbReference type="Proteomes" id="UP000001963">
    <property type="component" value="Chromosome"/>
</dbReference>
<dbReference type="GO" id="GO:0005829">
    <property type="term" value="C:cytosol"/>
    <property type="evidence" value="ECO:0007669"/>
    <property type="project" value="TreeGrafter"/>
</dbReference>
<dbReference type="GO" id="GO:0016020">
    <property type="term" value="C:membrane"/>
    <property type="evidence" value="ECO:0007669"/>
    <property type="project" value="GOC"/>
</dbReference>
<dbReference type="GO" id="GO:0000035">
    <property type="term" value="F:acyl binding"/>
    <property type="evidence" value="ECO:0007669"/>
    <property type="project" value="TreeGrafter"/>
</dbReference>
<dbReference type="GO" id="GO:0000036">
    <property type="term" value="F:acyl carrier activity"/>
    <property type="evidence" value="ECO:0007669"/>
    <property type="project" value="UniProtKB-UniRule"/>
</dbReference>
<dbReference type="GO" id="GO:0009245">
    <property type="term" value="P:lipid A biosynthetic process"/>
    <property type="evidence" value="ECO:0007669"/>
    <property type="project" value="TreeGrafter"/>
</dbReference>
<dbReference type="FunFam" id="1.10.1200.10:FF:000001">
    <property type="entry name" value="Acyl carrier protein"/>
    <property type="match status" value="1"/>
</dbReference>
<dbReference type="Gene3D" id="1.10.1200.10">
    <property type="entry name" value="ACP-like"/>
    <property type="match status" value="1"/>
</dbReference>
<dbReference type="HAMAP" id="MF_01217">
    <property type="entry name" value="Acyl_carrier"/>
    <property type="match status" value="1"/>
</dbReference>
<dbReference type="InterPro" id="IPR003231">
    <property type="entry name" value="ACP"/>
</dbReference>
<dbReference type="InterPro" id="IPR036736">
    <property type="entry name" value="ACP-like_sf"/>
</dbReference>
<dbReference type="InterPro" id="IPR009081">
    <property type="entry name" value="PP-bd_ACP"/>
</dbReference>
<dbReference type="InterPro" id="IPR006162">
    <property type="entry name" value="Ppantetheine_attach_site"/>
</dbReference>
<dbReference type="NCBIfam" id="TIGR00517">
    <property type="entry name" value="acyl_carrier"/>
    <property type="match status" value="1"/>
</dbReference>
<dbReference type="NCBIfam" id="NF002148">
    <property type="entry name" value="PRK00982.1-2"/>
    <property type="match status" value="1"/>
</dbReference>
<dbReference type="NCBIfam" id="NF002149">
    <property type="entry name" value="PRK00982.1-3"/>
    <property type="match status" value="1"/>
</dbReference>
<dbReference type="NCBIfam" id="NF002150">
    <property type="entry name" value="PRK00982.1-4"/>
    <property type="match status" value="1"/>
</dbReference>
<dbReference type="NCBIfam" id="NF002151">
    <property type="entry name" value="PRK00982.1-5"/>
    <property type="match status" value="1"/>
</dbReference>
<dbReference type="PANTHER" id="PTHR20863">
    <property type="entry name" value="ACYL CARRIER PROTEIN"/>
    <property type="match status" value="1"/>
</dbReference>
<dbReference type="PANTHER" id="PTHR20863:SF76">
    <property type="entry name" value="CARRIER DOMAIN-CONTAINING PROTEIN"/>
    <property type="match status" value="1"/>
</dbReference>
<dbReference type="Pfam" id="PF00550">
    <property type="entry name" value="PP-binding"/>
    <property type="match status" value="1"/>
</dbReference>
<dbReference type="SUPFAM" id="SSF47336">
    <property type="entry name" value="ACP-like"/>
    <property type="match status" value="1"/>
</dbReference>
<dbReference type="PROSITE" id="PS50075">
    <property type="entry name" value="CARRIER"/>
    <property type="match status" value="1"/>
</dbReference>
<dbReference type="PROSITE" id="PS00012">
    <property type="entry name" value="PHOSPHOPANTETHEINE"/>
    <property type="match status" value="1"/>
</dbReference>
<evidence type="ECO:0000255" key="1">
    <source>
        <dbReference type="HAMAP-Rule" id="MF_01217"/>
    </source>
</evidence>
<evidence type="ECO:0000255" key="2">
    <source>
        <dbReference type="PROSITE-ProRule" id="PRU00258"/>
    </source>
</evidence>
<proteinExistence type="inferred from homology"/>
<protein>
    <recommendedName>
        <fullName evidence="1">Acyl carrier protein</fullName>
        <shortName evidence="1">ACP</shortName>
    </recommendedName>
</protein>
<accession>Q0BPZ5</accession>
<feature type="chain" id="PRO_1000066614" description="Acyl carrier protein">
    <location>
        <begin position="1"/>
        <end position="79"/>
    </location>
</feature>
<feature type="domain" description="Carrier" evidence="2">
    <location>
        <begin position="2"/>
        <end position="77"/>
    </location>
</feature>
<feature type="modified residue" description="O-(pantetheine 4'-phosphoryl)serine" evidence="2">
    <location>
        <position position="37"/>
    </location>
</feature>
<keyword id="KW-0963">Cytoplasm</keyword>
<keyword id="KW-0275">Fatty acid biosynthesis</keyword>
<keyword id="KW-0276">Fatty acid metabolism</keyword>
<keyword id="KW-0444">Lipid biosynthesis</keyword>
<keyword id="KW-0443">Lipid metabolism</keyword>
<keyword id="KW-0596">Phosphopantetheine</keyword>
<keyword id="KW-0597">Phosphoprotein</keyword>
<keyword id="KW-1185">Reference proteome</keyword>
<gene>
    <name evidence="1" type="primary">acpP</name>
    <name type="ordered locus">GbCGDNIH1_2209</name>
</gene>
<organism>
    <name type="scientific">Granulibacter bethesdensis (strain ATCC BAA-1260 / CGDNIH1)</name>
    <dbReference type="NCBI Taxonomy" id="391165"/>
    <lineage>
        <taxon>Bacteria</taxon>
        <taxon>Pseudomonadati</taxon>
        <taxon>Pseudomonadota</taxon>
        <taxon>Alphaproteobacteria</taxon>
        <taxon>Acetobacterales</taxon>
        <taxon>Acetobacteraceae</taxon>
        <taxon>Granulibacter</taxon>
    </lineage>
</organism>
<sequence>MSEVADKVKKIVVEHLGVEESKVTPEASFIDDLGADSLDTVELVMAFEEAFGVEIPEDAAEKISTVKDAVEYIEKQKAA</sequence>